<proteinExistence type="inferred from homology"/>
<keyword id="KW-0067">ATP-binding</keyword>
<keyword id="KW-0347">Helicase</keyword>
<keyword id="KW-0378">Hydrolase</keyword>
<keyword id="KW-0547">Nucleotide-binding</keyword>
<keyword id="KW-1185">Reference proteome</keyword>
<keyword id="KW-0694">RNA-binding</keyword>
<keyword id="KW-0804">Transcription</keyword>
<keyword id="KW-0805">Transcription regulation</keyword>
<keyword id="KW-0806">Transcription termination</keyword>
<evidence type="ECO:0000255" key="1">
    <source>
        <dbReference type="HAMAP-Rule" id="MF_01884"/>
    </source>
</evidence>
<evidence type="ECO:0000255" key="2">
    <source>
        <dbReference type="PROSITE-ProRule" id="PRU01203"/>
    </source>
</evidence>
<evidence type="ECO:0000256" key="3">
    <source>
        <dbReference type="SAM" id="MobiDB-lite"/>
    </source>
</evidence>
<reference key="1">
    <citation type="journal article" date="2010" name="Stand. Genomic Sci.">
        <title>Complete genome sequence of Streptosporangium roseum type strain (NI 9100).</title>
        <authorList>
            <person name="Nolan M."/>
            <person name="Sikorski J."/>
            <person name="Jando M."/>
            <person name="Lucas S."/>
            <person name="Lapidus A."/>
            <person name="Glavina Del Rio T."/>
            <person name="Chen F."/>
            <person name="Tice H."/>
            <person name="Pitluck S."/>
            <person name="Cheng J.F."/>
            <person name="Chertkov O."/>
            <person name="Sims D."/>
            <person name="Meincke L."/>
            <person name="Brettin T."/>
            <person name="Han C."/>
            <person name="Detter J.C."/>
            <person name="Bruce D."/>
            <person name="Goodwin L."/>
            <person name="Land M."/>
            <person name="Hauser L."/>
            <person name="Chang Y.J."/>
            <person name="Jeffries C.D."/>
            <person name="Ivanova N."/>
            <person name="Mavromatis K."/>
            <person name="Mikhailova N."/>
            <person name="Chen A."/>
            <person name="Palaniappan K."/>
            <person name="Chain P."/>
            <person name="Rohde M."/>
            <person name="Goker M."/>
            <person name="Bristow J."/>
            <person name="Eisen J.A."/>
            <person name="Markowitz V."/>
            <person name="Hugenholtz P."/>
            <person name="Kyrpides N.C."/>
            <person name="Klenk H.P."/>
        </authorList>
    </citation>
    <scope>NUCLEOTIDE SEQUENCE [LARGE SCALE GENOMIC DNA]</scope>
    <source>
        <strain>ATCC 12428 / DSM 43021 / JCM 3005 / KCTC 9067 / NCIMB 10171 / NRRL 2505 / NI 9100</strain>
    </source>
</reference>
<sequence>MTIETTTKKRPRAARPPRPRESDAYLETVAGLLDVRDKTGYIRTHGYLPGVDDVRVPHAQIRQYGLRPGDHVVATTRKPYERLAEVESVNGSTDWRNRPDFADMTPIHPRERLRLETESVTSRVIDLFAPIGKGQRGLIVAPPKAGKTMVLQDLAAAITRNHPDCHLMVVLVGERPEEVTEMRESIHGEVAASTFDRPDRDHTALAELAVERAKRLAESGHDVVVLLDSLTRLGRAYNNLAPGGGRTLAGGLDAAALLPPRRFFGAARNLRDGGSLTILATALVETGSRMDDNLFEEFKGTGNMELRLSRALADKRLYPAVDLDASGTRREEILLDPQEHQLTWRLRRTLGGLEKQQALELLTDRLRETPSNAAFLQQVRQTT</sequence>
<accession>D2B129</accession>
<name>RHO_STRRD</name>
<feature type="chain" id="PRO_0000398674" description="Transcription termination factor Rho">
    <location>
        <begin position="1"/>
        <end position="383"/>
    </location>
</feature>
<feature type="domain" description="Rho RNA-BD" evidence="2">
    <location>
        <begin position="26"/>
        <end position="93"/>
    </location>
</feature>
<feature type="region of interest" description="Disordered" evidence="3">
    <location>
        <begin position="1"/>
        <end position="22"/>
    </location>
</feature>
<feature type="compositionally biased region" description="Basic residues" evidence="3">
    <location>
        <begin position="8"/>
        <end position="17"/>
    </location>
</feature>
<feature type="binding site" evidence="1">
    <location>
        <begin position="132"/>
        <end position="137"/>
    </location>
    <ligand>
        <name>ATP</name>
        <dbReference type="ChEBI" id="CHEBI:30616"/>
    </ligand>
</feature>
<feature type="binding site" evidence="1">
    <location>
        <begin position="144"/>
        <end position="149"/>
    </location>
    <ligand>
        <name>ATP</name>
        <dbReference type="ChEBI" id="CHEBI:30616"/>
    </ligand>
</feature>
<feature type="binding site" evidence="1">
    <location>
        <position position="175"/>
    </location>
    <ligand>
        <name>ATP</name>
        <dbReference type="ChEBI" id="CHEBI:30616"/>
    </ligand>
</feature>
<organism>
    <name type="scientific">Streptosporangium roseum (strain ATCC 12428 / DSM 43021 / JCM 3005 / KCTC 9067 / NCIMB 10171 / NRRL 2505 / NI 9100)</name>
    <dbReference type="NCBI Taxonomy" id="479432"/>
    <lineage>
        <taxon>Bacteria</taxon>
        <taxon>Bacillati</taxon>
        <taxon>Actinomycetota</taxon>
        <taxon>Actinomycetes</taxon>
        <taxon>Streptosporangiales</taxon>
        <taxon>Streptosporangiaceae</taxon>
        <taxon>Streptosporangium</taxon>
    </lineage>
</organism>
<gene>
    <name evidence="1" type="primary">rho</name>
    <name type="ordered locus">Sros_0407</name>
</gene>
<protein>
    <recommendedName>
        <fullName evidence="1">Transcription termination factor Rho</fullName>
        <ecNumber evidence="1">3.6.4.-</ecNumber>
    </recommendedName>
    <alternativeName>
        <fullName evidence="1">ATP-dependent helicase Rho</fullName>
    </alternativeName>
</protein>
<comment type="function">
    <text evidence="1">Facilitates transcription termination by a mechanism that involves Rho binding to the nascent RNA, activation of Rho's RNA-dependent ATPase activity, and release of the mRNA from the DNA template.</text>
</comment>
<comment type="subunit">
    <text evidence="1">Homohexamer. The homohexamer assembles into an open ring structure.</text>
</comment>
<comment type="similarity">
    <text evidence="1">Belongs to the Rho family.</text>
</comment>
<dbReference type="EC" id="3.6.4.-" evidence="1"/>
<dbReference type="EMBL" id="CP001814">
    <property type="protein sequence ID" value="ACZ83436.1"/>
    <property type="molecule type" value="Genomic_DNA"/>
</dbReference>
<dbReference type="RefSeq" id="WP_012887182.1">
    <property type="nucleotide sequence ID" value="NC_013595.1"/>
</dbReference>
<dbReference type="SMR" id="D2B129"/>
<dbReference type="STRING" id="479432.Sros_0407"/>
<dbReference type="KEGG" id="sro:Sros_0407"/>
<dbReference type="eggNOG" id="COG1158">
    <property type="taxonomic scope" value="Bacteria"/>
</dbReference>
<dbReference type="HOGENOM" id="CLU_016377_4_3_11"/>
<dbReference type="OrthoDB" id="9805197at2"/>
<dbReference type="Proteomes" id="UP000002029">
    <property type="component" value="Chromosome"/>
</dbReference>
<dbReference type="GO" id="GO:0005524">
    <property type="term" value="F:ATP binding"/>
    <property type="evidence" value="ECO:0007669"/>
    <property type="project" value="UniProtKB-UniRule"/>
</dbReference>
<dbReference type="GO" id="GO:0016887">
    <property type="term" value="F:ATP hydrolysis activity"/>
    <property type="evidence" value="ECO:0007669"/>
    <property type="project" value="InterPro"/>
</dbReference>
<dbReference type="GO" id="GO:0008186">
    <property type="term" value="F:ATP-dependent activity, acting on RNA"/>
    <property type="evidence" value="ECO:0007669"/>
    <property type="project" value="InterPro"/>
</dbReference>
<dbReference type="GO" id="GO:0004386">
    <property type="term" value="F:helicase activity"/>
    <property type="evidence" value="ECO:0007669"/>
    <property type="project" value="UniProtKB-UniRule"/>
</dbReference>
<dbReference type="GO" id="GO:0003723">
    <property type="term" value="F:RNA binding"/>
    <property type="evidence" value="ECO:0007669"/>
    <property type="project" value="UniProtKB-UniRule"/>
</dbReference>
<dbReference type="GO" id="GO:0006353">
    <property type="term" value="P:DNA-templated transcription termination"/>
    <property type="evidence" value="ECO:0007669"/>
    <property type="project" value="UniProtKB-UniRule"/>
</dbReference>
<dbReference type="CDD" id="cd01128">
    <property type="entry name" value="rho_factor_C"/>
    <property type="match status" value="1"/>
</dbReference>
<dbReference type="Gene3D" id="2.40.50.140">
    <property type="entry name" value="Nucleic acid-binding proteins"/>
    <property type="match status" value="1"/>
</dbReference>
<dbReference type="Gene3D" id="3.40.50.300">
    <property type="entry name" value="P-loop containing nucleotide triphosphate hydrolases"/>
    <property type="match status" value="1"/>
</dbReference>
<dbReference type="HAMAP" id="MF_01884">
    <property type="entry name" value="Rho"/>
    <property type="match status" value="1"/>
</dbReference>
<dbReference type="InterPro" id="IPR003593">
    <property type="entry name" value="AAA+_ATPase"/>
</dbReference>
<dbReference type="InterPro" id="IPR000194">
    <property type="entry name" value="ATPase_F1/V1/A1_a/bsu_nucl-bd"/>
</dbReference>
<dbReference type="InterPro" id="IPR012340">
    <property type="entry name" value="NA-bd_OB-fold"/>
</dbReference>
<dbReference type="InterPro" id="IPR027417">
    <property type="entry name" value="P-loop_NTPase"/>
</dbReference>
<dbReference type="InterPro" id="IPR041703">
    <property type="entry name" value="Rho_factor_ATP-bd"/>
</dbReference>
<dbReference type="InterPro" id="IPR011113">
    <property type="entry name" value="Rho_RNA-bd"/>
</dbReference>
<dbReference type="InterPro" id="IPR004665">
    <property type="entry name" value="Term_rho"/>
</dbReference>
<dbReference type="NCBIfam" id="NF006886">
    <property type="entry name" value="PRK09376.1"/>
    <property type="match status" value="1"/>
</dbReference>
<dbReference type="PANTHER" id="PTHR46425">
    <property type="entry name" value="TRANSCRIPTION TERMINATION FACTOR RHO"/>
    <property type="match status" value="1"/>
</dbReference>
<dbReference type="PANTHER" id="PTHR46425:SF1">
    <property type="entry name" value="TRANSCRIPTION TERMINATION FACTOR RHO"/>
    <property type="match status" value="1"/>
</dbReference>
<dbReference type="Pfam" id="PF00006">
    <property type="entry name" value="ATP-synt_ab"/>
    <property type="match status" value="1"/>
</dbReference>
<dbReference type="Pfam" id="PF07497">
    <property type="entry name" value="Rho_RNA_bind"/>
    <property type="match status" value="1"/>
</dbReference>
<dbReference type="SMART" id="SM00382">
    <property type="entry name" value="AAA"/>
    <property type="match status" value="1"/>
</dbReference>
<dbReference type="SUPFAM" id="SSF50249">
    <property type="entry name" value="Nucleic acid-binding proteins"/>
    <property type="match status" value="1"/>
</dbReference>
<dbReference type="SUPFAM" id="SSF52540">
    <property type="entry name" value="P-loop containing nucleoside triphosphate hydrolases"/>
    <property type="match status" value="1"/>
</dbReference>
<dbReference type="PROSITE" id="PS51856">
    <property type="entry name" value="RHO_RNA_BD"/>
    <property type="match status" value="1"/>
</dbReference>